<organism>
    <name type="scientific">Drosophila melanogaster</name>
    <name type="common">Fruit fly</name>
    <dbReference type="NCBI Taxonomy" id="7227"/>
    <lineage>
        <taxon>Eukaryota</taxon>
        <taxon>Metazoa</taxon>
        <taxon>Ecdysozoa</taxon>
        <taxon>Arthropoda</taxon>
        <taxon>Hexapoda</taxon>
        <taxon>Insecta</taxon>
        <taxon>Pterygota</taxon>
        <taxon>Neoptera</taxon>
        <taxon>Endopterygota</taxon>
        <taxon>Diptera</taxon>
        <taxon>Brachycera</taxon>
        <taxon>Muscomorpha</taxon>
        <taxon>Ephydroidea</taxon>
        <taxon>Drosophilidae</taxon>
        <taxon>Drosophila</taxon>
        <taxon>Sophophora</taxon>
    </lineage>
</organism>
<dbReference type="EMBL" id="M96388">
    <property type="protein sequence ID" value="AAA28662.1"/>
    <property type="molecule type" value="Genomic_DNA"/>
</dbReference>
<dbReference type="EMBL" id="L07288">
    <property type="protein sequence ID" value="AAC37178.1"/>
    <property type="molecule type" value="mRNA"/>
</dbReference>
<dbReference type="EMBL" id="AE014296">
    <property type="protein sequence ID" value="AAF50672.2"/>
    <property type="molecule type" value="Genomic_DNA"/>
</dbReference>
<dbReference type="EMBL" id="M75882">
    <property type="protein sequence ID" value="AAA28661.1"/>
    <property type="molecule type" value="mRNA"/>
</dbReference>
<dbReference type="PIR" id="S28399">
    <property type="entry name" value="S18253"/>
</dbReference>
<dbReference type="RefSeq" id="NP_476617.1">
    <property type="nucleotide sequence ID" value="NM_057269.3"/>
</dbReference>
<dbReference type="SMR" id="Q00174"/>
<dbReference type="BioGRID" id="64176">
    <property type="interactions" value="24"/>
</dbReference>
<dbReference type="FunCoup" id="Q00174">
    <property type="interactions" value="71"/>
</dbReference>
<dbReference type="IntAct" id="Q00174">
    <property type="interactions" value="12"/>
</dbReference>
<dbReference type="STRING" id="7227.FBpp0076722"/>
<dbReference type="GlyCosmos" id="Q00174">
    <property type="glycosylation" value="32 sites, No reported glycans"/>
</dbReference>
<dbReference type="GlyGen" id="Q00174">
    <property type="glycosylation" value="34 sites, 1 O-linked glycan (1 site)"/>
</dbReference>
<dbReference type="iPTMnet" id="Q00174"/>
<dbReference type="PaxDb" id="7227-FBpp0076722"/>
<dbReference type="EnsemblMetazoa" id="FBtr0077014">
    <property type="protein sequence ID" value="FBpp0076722"/>
    <property type="gene ID" value="FBgn0002526"/>
</dbReference>
<dbReference type="GeneID" id="38723"/>
<dbReference type="KEGG" id="dme:Dmel_CG10236"/>
<dbReference type="AGR" id="FB:FBgn0002526"/>
<dbReference type="CTD" id="38723"/>
<dbReference type="FlyBase" id="FBgn0002526">
    <property type="gene designation" value="LanA"/>
</dbReference>
<dbReference type="VEuPathDB" id="VectorBase:FBgn0002526"/>
<dbReference type="eggNOG" id="KOG1836">
    <property type="taxonomic scope" value="Eukaryota"/>
</dbReference>
<dbReference type="GeneTree" id="ENSGT00940000167067"/>
<dbReference type="HOGENOM" id="CLU_000301_1_0_1"/>
<dbReference type="InParanoid" id="Q00174"/>
<dbReference type="OrthoDB" id="10011303at2759"/>
<dbReference type="PhylomeDB" id="Q00174"/>
<dbReference type="SignaLink" id="Q00174"/>
<dbReference type="BioGRID-ORCS" id="38723">
    <property type="hits" value="0 hits in 3 CRISPR screens"/>
</dbReference>
<dbReference type="ChiTaRS" id="LanA">
    <property type="organism name" value="fly"/>
</dbReference>
<dbReference type="GenomeRNAi" id="38723"/>
<dbReference type="PRO" id="PR:Q00174"/>
<dbReference type="Proteomes" id="UP000000803">
    <property type="component" value="Chromosome 3L"/>
</dbReference>
<dbReference type="Bgee" id="FBgn0002526">
    <property type="expression patterns" value="Expressed in hemocyte (sensu Nematoda and Protostomia) and 123 other cell types or tissues"/>
</dbReference>
<dbReference type="ExpressionAtlas" id="Q00174">
    <property type="expression patterns" value="baseline and differential"/>
</dbReference>
<dbReference type="GO" id="GO:0030424">
    <property type="term" value="C:axon"/>
    <property type="evidence" value="ECO:0007669"/>
    <property type="project" value="UniProtKB-SubCell"/>
</dbReference>
<dbReference type="GO" id="GO:0005604">
    <property type="term" value="C:basement membrane"/>
    <property type="evidence" value="ECO:0000314"/>
    <property type="project" value="FlyBase"/>
</dbReference>
<dbReference type="GO" id="GO:0031012">
    <property type="term" value="C:extracellular matrix"/>
    <property type="evidence" value="ECO:0007005"/>
    <property type="project" value="FlyBase"/>
</dbReference>
<dbReference type="GO" id="GO:0005576">
    <property type="term" value="C:extracellular region"/>
    <property type="evidence" value="ECO:0007669"/>
    <property type="project" value="UniProtKB-KW"/>
</dbReference>
<dbReference type="GO" id="GO:0036062">
    <property type="term" value="C:presynaptic periactive zone"/>
    <property type="evidence" value="ECO:0000314"/>
    <property type="project" value="FlyBase"/>
</dbReference>
<dbReference type="GO" id="GO:0008021">
    <property type="term" value="C:synaptic vesicle"/>
    <property type="evidence" value="ECO:0007669"/>
    <property type="project" value="UniProtKB-SubCell"/>
</dbReference>
<dbReference type="GO" id="GO:0005201">
    <property type="term" value="F:extracellular matrix structural constituent"/>
    <property type="evidence" value="ECO:0000318"/>
    <property type="project" value="GO_Central"/>
</dbReference>
<dbReference type="GO" id="GO:0005102">
    <property type="term" value="F:signaling receptor binding"/>
    <property type="evidence" value="ECO:0007669"/>
    <property type="project" value="InterPro"/>
</dbReference>
<dbReference type="GO" id="GO:0009887">
    <property type="term" value="P:animal organ morphogenesis"/>
    <property type="evidence" value="ECO:0000318"/>
    <property type="project" value="GO_Central"/>
</dbReference>
<dbReference type="GO" id="GO:0007411">
    <property type="term" value="P:axon guidance"/>
    <property type="evidence" value="ECO:0000315"/>
    <property type="project" value="FlyBase"/>
</dbReference>
<dbReference type="GO" id="GO:0071711">
    <property type="term" value="P:basement membrane organization"/>
    <property type="evidence" value="ECO:0000315"/>
    <property type="project" value="UniProtKB"/>
</dbReference>
<dbReference type="GO" id="GO:0033627">
    <property type="term" value="P:cell adhesion mediated by integrin"/>
    <property type="evidence" value="ECO:0000314"/>
    <property type="project" value="FlyBase"/>
</dbReference>
<dbReference type="GO" id="GO:0035001">
    <property type="term" value="P:dorsal trunk growth, open tracheal system"/>
    <property type="evidence" value="ECO:0000315"/>
    <property type="project" value="FlyBase"/>
</dbReference>
<dbReference type="GO" id="GO:0007507">
    <property type="term" value="P:heart development"/>
    <property type="evidence" value="ECO:0000315"/>
    <property type="project" value="FlyBase"/>
</dbReference>
<dbReference type="GO" id="GO:0035011">
    <property type="term" value="P:melanotic encapsulation of foreign target"/>
    <property type="evidence" value="ECO:0000315"/>
    <property type="project" value="FlyBase"/>
</dbReference>
<dbReference type="GO" id="GO:0007498">
    <property type="term" value="P:mesoderm development"/>
    <property type="evidence" value="ECO:0000270"/>
    <property type="project" value="FlyBase"/>
</dbReference>
<dbReference type="GO" id="GO:0045886">
    <property type="term" value="P:negative regulation of synaptic assembly at neuromuscular junction"/>
    <property type="evidence" value="ECO:0000315"/>
    <property type="project" value="FlyBase"/>
</dbReference>
<dbReference type="GO" id="GO:0030155">
    <property type="term" value="P:regulation of cell adhesion"/>
    <property type="evidence" value="ECO:0007669"/>
    <property type="project" value="InterPro"/>
</dbReference>
<dbReference type="GO" id="GO:0030334">
    <property type="term" value="P:regulation of cell migration"/>
    <property type="evidence" value="ECO:0007669"/>
    <property type="project" value="InterPro"/>
</dbReference>
<dbReference type="GO" id="GO:0045995">
    <property type="term" value="P:regulation of embryonic development"/>
    <property type="evidence" value="ECO:0007669"/>
    <property type="project" value="InterPro"/>
</dbReference>
<dbReference type="GO" id="GO:0034446">
    <property type="term" value="P:substrate adhesion-dependent cell spreading"/>
    <property type="evidence" value="ECO:0000314"/>
    <property type="project" value="FlyBase"/>
</dbReference>
<dbReference type="GO" id="GO:0009888">
    <property type="term" value="P:tissue development"/>
    <property type="evidence" value="ECO:0000318"/>
    <property type="project" value="GO_Central"/>
</dbReference>
<dbReference type="CDD" id="cd02795">
    <property type="entry name" value="CBM6-CBM35-CBM36_like"/>
    <property type="match status" value="1"/>
</dbReference>
<dbReference type="CDD" id="cd00055">
    <property type="entry name" value="EGF_Lam"/>
    <property type="match status" value="22"/>
</dbReference>
<dbReference type="CDD" id="cd00110">
    <property type="entry name" value="LamG"/>
    <property type="match status" value="5"/>
</dbReference>
<dbReference type="FunFam" id="2.10.25.10:FF:000011">
    <property type="entry name" value="Cadherin EGF LAG seven-pass G-type receptor"/>
    <property type="match status" value="2"/>
</dbReference>
<dbReference type="FunFam" id="2.10.25.10:FF:000074">
    <property type="entry name" value="Laminin subunit alpha"/>
    <property type="match status" value="1"/>
</dbReference>
<dbReference type="FunFam" id="2.10.25.10:FF:000388">
    <property type="entry name" value="Laminin subunit alpha"/>
    <property type="match status" value="1"/>
</dbReference>
<dbReference type="FunFam" id="2.60.120.200:FF:000319">
    <property type="entry name" value="Laminin subunit alpha"/>
    <property type="match status" value="1"/>
</dbReference>
<dbReference type="FunFam" id="2.60.120.200:FF:000497">
    <property type="entry name" value="Laminin subunit alpha"/>
    <property type="match status" value="1"/>
</dbReference>
<dbReference type="FunFam" id="2.10.25.10:FF:000090">
    <property type="entry name" value="laminin subunit alpha"/>
    <property type="match status" value="1"/>
</dbReference>
<dbReference type="FunFam" id="2.10.25.10:FF:000845">
    <property type="entry name" value="laminin subunit alpha"/>
    <property type="match status" value="1"/>
</dbReference>
<dbReference type="FunFam" id="2.60.120.200:FF:000329">
    <property type="entry name" value="laminin subunit alpha"/>
    <property type="match status" value="1"/>
</dbReference>
<dbReference type="FunFam" id="2.10.25.10:FF:000069">
    <property type="entry name" value="Laminin subunit alpha 1"/>
    <property type="match status" value="1"/>
</dbReference>
<dbReference type="FunFam" id="2.10.25.10:FF:000082">
    <property type="entry name" value="Laminin subunit alpha 1"/>
    <property type="match status" value="1"/>
</dbReference>
<dbReference type="FunFam" id="2.10.25.10:FF:000454">
    <property type="entry name" value="Laminin subunit alpha 1"/>
    <property type="match status" value="1"/>
</dbReference>
<dbReference type="FunFam" id="2.10.25.10:FF:000033">
    <property type="entry name" value="Laminin subunit alpha 2"/>
    <property type="match status" value="1"/>
</dbReference>
<dbReference type="FunFam" id="2.10.25.10:FF:000189">
    <property type="entry name" value="Laminin subunit alpha 2"/>
    <property type="match status" value="1"/>
</dbReference>
<dbReference type="FunFam" id="2.10.25.10:FF:000034">
    <property type="entry name" value="Laminin subunit alpha 3"/>
    <property type="match status" value="2"/>
</dbReference>
<dbReference type="FunFam" id="2.10.25.10:FF:000051">
    <property type="entry name" value="Laminin subunit alpha 4"/>
    <property type="match status" value="1"/>
</dbReference>
<dbReference type="FunFam" id="2.10.25.10:FF:000407">
    <property type="entry name" value="Laminin subunit alpha-3"/>
    <property type="match status" value="1"/>
</dbReference>
<dbReference type="FunFam" id="2.60.120.200:FF:000160">
    <property type="entry name" value="Laminin subunit alpha-3"/>
    <property type="match status" value="1"/>
</dbReference>
<dbReference type="FunFam" id="2.60.120.260:FF:000092">
    <property type="entry name" value="Laminin subunit alpha-3"/>
    <property type="match status" value="1"/>
</dbReference>
<dbReference type="FunFam" id="2.10.25.10:FF:000542">
    <property type="entry name" value="Laminin-like protein epi-1"/>
    <property type="match status" value="1"/>
</dbReference>
<dbReference type="FunFam" id="2.10.25.10:FF:000224">
    <property type="entry name" value="Usherin"/>
    <property type="match status" value="1"/>
</dbReference>
<dbReference type="Gene3D" id="2.60.120.200">
    <property type="match status" value="5"/>
</dbReference>
<dbReference type="Gene3D" id="2.60.120.260">
    <property type="entry name" value="Galactose-binding domain-like"/>
    <property type="match status" value="2"/>
</dbReference>
<dbReference type="Gene3D" id="2.10.25.10">
    <property type="entry name" value="Laminin"/>
    <property type="match status" value="21"/>
</dbReference>
<dbReference type="InterPro" id="IPR013320">
    <property type="entry name" value="ConA-like_dom_sf"/>
</dbReference>
<dbReference type="InterPro" id="IPR000742">
    <property type="entry name" value="EGF-like_dom"/>
</dbReference>
<dbReference type="InterPro" id="IPR050440">
    <property type="entry name" value="Laminin/Netrin_ECM"/>
</dbReference>
<dbReference type="InterPro" id="IPR009254">
    <property type="entry name" value="Laminin_aI"/>
</dbReference>
<dbReference type="InterPro" id="IPR010307">
    <property type="entry name" value="Laminin_dom_II"/>
</dbReference>
<dbReference type="InterPro" id="IPR001791">
    <property type="entry name" value="Laminin_G"/>
</dbReference>
<dbReference type="InterPro" id="IPR000034">
    <property type="entry name" value="Laminin_IV"/>
</dbReference>
<dbReference type="InterPro" id="IPR008211">
    <property type="entry name" value="Laminin_N"/>
</dbReference>
<dbReference type="InterPro" id="IPR002049">
    <property type="entry name" value="LE_dom"/>
</dbReference>
<dbReference type="InterPro" id="IPR056863">
    <property type="entry name" value="LMN_ATRN_NET-like_EGF"/>
</dbReference>
<dbReference type="PANTHER" id="PTHR10574:SF406">
    <property type="entry name" value="LAMININ SUBUNIT ALPHA 5"/>
    <property type="match status" value="1"/>
</dbReference>
<dbReference type="PANTHER" id="PTHR10574">
    <property type="entry name" value="NETRIN/LAMININ-RELATED"/>
    <property type="match status" value="1"/>
</dbReference>
<dbReference type="Pfam" id="PF00053">
    <property type="entry name" value="EGF_laminin"/>
    <property type="match status" value="20"/>
</dbReference>
<dbReference type="Pfam" id="PF24973">
    <property type="entry name" value="EGF_LMN_ATRN"/>
    <property type="match status" value="1"/>
</dbReference>
<dbReference type="Pfam" id="PF00052">
    <property type="entry name" value="Laminin_B"/>
    <property type="match status" value="1"/>
</dbReference>
<dbReference type="Pfam" id="PF02210">
    <property type="entry name" value="Laminin_G_2"/>
    <property type="match status" value="5"/>
</dbReference>
<dbReference type="Pfam" id="PF06008">
    <property type="entry name" value="Laminin_I"/>
    <property type="match status" value="1"/>
</dbReference>
<dbReference type="Pfam" id="PF06009">
    <property type="entry name" value="Laminin_II"/>
    <property type="match status" value="1"/>
</dbReference>
<dbReference type="Pfam" id="PF00055">
    <property type="entry name" value="Laminin_N"/>
    <property type="match status" value="1"/>
</dbReference>
<dbReference type="PRINTS" id="PR00011">
    <property type="entry name" value="EGFLAMININ"/>
</dbReference>
<dbReference type="SMART" id="SM00181">
    <property type="entry name" value="EGF"/>
    <property type="match status" value="14"/>
</dbReference>
<dbReference type="SMART" id="SM00180">
    <property type="entry name" value="EGF_Lam"/>
    <property type="match status" value="21"/>
</dbReference>
<dbReference type="SMART" id="SM01411">
    <property type="entry name" value="Ephrin_rec_like"/>
    <property type="match status" value="4"/>
</dbReference>
<dbReference type="SMART" id="SM00281">
    <property type="entry name" value="LamB"/>
    <property type="match status" value="1"/>
</dbReference>
<dbReference type="SMART" id="SM00282">
    <property type="entry name" value="LamG"/>
    <property type="match status" value="5"/>
</dbReference>
<dbReference type="SMART" id="SM00136">
    <property type="entry name" value="LamNT"/>
    <property type="match status" value="1"/>
</dbReference>
<dbReference type="SUPFAM" id="SSF49899">
    <property type="entry name" value="Concanavalin A-like lectins/glucanases"/>
    <property type="match status" value="5"/>
</dbReference>
<dbReference type="SUPFAM" id="SSF57196">
    <property type="entry name" value="EGF/Laminin"/>
    <property type="match status" value="19"/>
</dbReference>
<dbReference type="PROSITE" id="PS00022">
    <property type="entry name" value="EGF_1"/>
    <property type="match status" value="17"/>
</dbReference>
<dbReference type="PROSITE" id="PS01186">
    <property type="entry name" value="EGF_2"/>
    <property type="match status" value="5"/>
</dbReference>
<dbReference type="PROSITE" id="PS01248">
    <property type="entry name" value="EGF_LAM_1"/>
    <property type="match status" value="19"/>
</dbReference>
<dbReference type="PROSITE" id="PS50027">
    <property type="entry name" value="EGF_LAM_2"/>
    <property type="match status" value="22"/>
</dbReference>
<dbReference type="PROSITE" id="PS50025">
    <property type="entry name" value="LAM_G_DOMAIN"/>
    <property type="match status" value="5"/>
</dbReference>
<dbReference type="PROSITE" id="PS51115">
    <property type="entry name" value="LAMININ_IVA"/>
    <property type="match status" value="1"/>
</dbReference>
<dbReference type="PROSITE" id="PS51117">
    <property type="entry name" value="LAMININ_NTER"/>
    <property type="match status" value="1"/>
</dbReference>
<reference key="1">
    <citation type="journal article" date="1992" name="EMBO J.">
        <title>Laminin A chain: expression during Drosophila development and genomic sequence.</title>
        <authorList>
            <person name="Kusche-Gullberg M."/>
            <person name="Garrison K."/>
            <person name="Mackrell A.J."/>
            <person name="Fessler L.I."/>
            <person name="Fessler J.H."/>
        </authorList>
    </citation>
    <scope>NUCLEOTIDE SEQUENCE [GENOMIC DNA]</scope>
    <scope>SUBCELLULAR LOCATION</scope>
    <scope>TISSUE SPECIFICITY</scope>
    <scope>DEVELOPMENTAL STAGE</scope>
</reference>
<reference key="2">
    <citation type="journal article" date="1993" name="Development">
        <title>Genetic analysis of laminin A reveals diverse functions during morphogenesis in Drosophila.</title>
        <authorList>
            <person name="Henchcliffe C."/>
            <person name="Garcia-Alonso L."/>
            <person name="Tang J."/>
            <person name="Goodman C.S."/>
        </authorList>
    </citation>
    <scope>NUCLEOTIDE SEQUENCE [MRNA]</scope>
    <scope>FUNCTION</scope>
    <scope>DISRUPTION PHENOTYPE</scope>
    <source>
        <tissue>Embryo</tissue>
    </source>
</reference>
<reference key="3">
    <citation type="journal article" date="2000" name="Science">
        <title>The genome sequence of Drosophila melanogaster.</title>
        <authorList>
            <person name="Adams M.D."/>
            <person name="Celniker S.E."/>
            <person name="Holt R.A."/>
            <person name="Evans C.A."/>
            <person name="Gocayne J.D."/>
            <person name="Amanatides P.G."/>
            <person name="Scherer S.E."/>
            <person name="Li P.W."/>
            <person name="Hoskins R.A."/>
            <person name="Galle R.F."/>
            <person name="George R.A."/>
            <person name="Lewis S.E."/>
            <person name="Richards S."/>
            <person name="Ashburner M."/>
            <person name="Henderson S.N."/>
            <person name="Sutton G.G."/>
            <person name="Wortman J.R."/>
            <person name="Yandell M.D."/>
            <person name="Zhang Q."/>
            <person name="Chen L.X."/>
            <person name="Brandon R.C."/>
            <person name="Rogers Y.-H.C."/>
            <person name="Blazej R.G."/>
            <person name="Champe M."/>
            <person name="Pfeiffer B.D."/>
            <person name="Wan K.H."/>
            <person name="Doyle C."/>
            <person name="Baxter E.G."/>
            <person name="Helt G."/>
            <person name="Nelson C.R."/>
            <person name="Miklos G.L.G."/>
            <person name="Abril J.F."/>
            <person name="Agbayani A."/>
            <person name="An H.-J."/>
            <person name="Andrews-Pfannkoch C."/>
            <person name="Baldwin D."/>
            <person name="Ballew R.M."/>
            <person name="Basu A."/>
            <person name="Baxendale J."/>
            <person name="Bayraktaroglu L."/>
            <person name="Beasley E.M."/>
            <person name="Beeson K.Y."/>
            <person name="Benos P.V."/>
            <person name="Berman B.P."/>
            <person name="Bhandari D."/>
            <person name="Bolshakov S."/>
            <person name="Borkova D."/>
            <person name="Botchan M.R."/>
            <person name="Bouck J."/>
            <person name="Brokstein P."/>
            <person name="Brottier P."/>
            <person name="Burtis K.C."/>
            <person name="Busam D.A."/>
            <person name="Butler H."/>
            <person name="Cadieu E."/>
            <person name="Center A."/>
            <person name="Chandra I."/>
            <person name="Cherry J.M."/>
            <person name="Cawley S."/>
            <person name="Dahlke C."/>
            <person name="Davenport L.B."/>
            <person name="Davies P."/>
            <person name="de Pablos B."/>
            <person name="Delcher A."/>
            <person name="Deng Z."/>
            <person name="Mays A.D."/>
            <person name="Dew I."/>
            <person name="Dietz S.M."/>
            <person name="Dodson K."/>
            <person name="Doup L.E."/>
            <person name="Downes M."/>
            <person name="Dugan-Rocha S."/>
            <person name="Dunkov B.C."/>
            <person name="Dunn P."/>
            <person name="Durbin K.J."/>
            <person name="Evangelista C.C."/>
            <person name="Ferraz C."/>
            <person name="Ferriera S."/>
            <person name="Fleischmann W."/>
            <person name="Fosler C."/>
            <person name="Gabrielian A.E."/>
            <person name="Garg N.S."/>
            <person name="Gelbart W.M."/>
            <person name="Glasser K."/>
            <person name="Glodek A."/>
            <person name="Gong F."/>
            <person name="Gorrell J.H."/>
            <person name="Gu Z."/>
            <person name="Guan P."/>
            <person name="Harris M."/>
            <person name="Harris N.L."/>
            <person name="Harvey D.A."/>
            <person name="Heiman T.J."/>
            <person name="Hernandez J.R."/>
            <person name="Houck J."/>
            <person name="Hostin D."/>
            <person name="Houston K.A."/>
            <person name="Howland T.J."/>
            <person name="Wei M.-H."/>
            <person name="Ibegwam C."/>
            <person name="Jalali M."/>
            <person name="Kalush F."/>
            <person name="Karpen G.H."/>
            <person name="Ke Z."/>
            <person name="Kennison J.A."/>
            <person name="Ketchum K.A."/>
            <person name="Kimmel B.E."/>
            <person name="Kodira C.D."/>
            <person name="Kraft C.L."/>
            <person name="Kravitz S."/>
            <person name="Kulp D."/>
            <person name="Lai Z."/>
            <person name="Lasko P."/>
            <person name="Lei Y."/>
            <person name="Levitsky A.A."/>
            <person name="Li J.H."/>
            <person name="Li Z."/>
            <person name="Liang Y."/>
            <person name="Lin X."/>
            <person name="Liu X."/>
            <person name="Mattei B."/>
            <person name="McIntosh T.C."/>
            <person name="McLeod M.P."/>
            <person name="McPherson D."/>
            <person name="Merkulov G."/>
            <person name="Milshina N.V."/>
            <person name="Mobarry C."/>
            <person name="Morris J."/>
            <person name="Moshrefi A."/>
            <person name="Mount S.M."/>
            <person name="Moy M."/>
            <person name="Murphy B."/>
            <person name="Murphy L."/>
            <person name="Muzny D.M."/>
            <person name="Nelson D.L."/>
            <person name="Nelson D.R."/>
            <person name="Nelson K.A."/>
            <person name="Nixon K."/>
            <person name="Nusskern D.R."/>
            <person name="Pacleb J.M."/>
            <person name="Palazzolo M."/>
            <person name="Pittman G.S."/>
            <person name="Pan S."/>
            <person name="Pollard J."/>
            <person name="Puri V."/>
            <person name="Reese M.G."/>
            <person name="Reinert K."/>
            <person name="Remington K."/>
            <person name="Saunders R.D.C."/>
            <person name="Scheeler F."/>
            <person name="Shen H."/>
            <person name="Shue B.C."/>
            <person name="Siden-Kiamos I."/>
            <person name="Simpson M."/>
            <person name="Skupski M.P."/>
            <person name="Smith T.J."/>
            <person name="Spier E."/>
            <person name="Spradling A.C."/>
            <person name="Stapleton M."/>
            <person name="Strong R."/>
            <person name="Sun E."/>
            <person name="Svirskas R."/>
            <person name="Tector C."/>
            <person name="Turner R."/>
            <person name="Venter E."/>
            <person name="Wang A.H."/>
            <person name="Wang X."/>
            <person name="Wang Z.-Y."/>
            <person name="Wassarman D.A."/>
            <person name="Weinstock G.M."/>
            <person name="Weissenbach J."/>
            <person name="Williams S.M."/>
            <person name="Woodage T."/>
            <person name="Worley K.C."/>
            <person name="Wu D."/>
            <person name="Yang S."/>
            <person name="Yao Q.A."/>
            <person name="Ye J."/>
            <person name="Yeh R.-F."/>
            <person name="Zaveri J.S."/>
            <person name="Zhan M."/>
            <person name="Zhang G."/>
            <person name="Zhao Q."/>
            <person name="Zheng L."/>
            <person name="Zheng X.H."/>
            <person name="Zhong F.N."/>
            <person name="Zhong W."/>
            <person name="Zhou X."/>
            <person name="Zhu S.C."/>
            <person name="Zhu X."/>
            <person name="Smith H.O."/>
            <person name="Gibbs R.A."/>
            <person name="Myers E.W."/>
            <person name="Rubin G.M."/>
            <person name="Venter J.C."/>
        </authorList>
    </citation>
    <scope>NUCLEOTIDE SEQUENCE [LARGE SCALE GENOMIC DNA]</scope>
    <source>
        <strain>Berkeley</strain>
    </source>
</reference>
<reference key="4">
    <citation type="journal article" date="2002" name="Genome Biol.">
        <title>Annotation of the Drosophila melanogaster euchromatic genome: a systematic review.</title>
        <authorList>
            <person name="Misra S."/>
            <person name="Crosby M.A."/>
            <person name="Mungall C.J."/>
            <person name="Matthews B.B."/>
            <person name="Campbell K.S."/>
            <person name="Hradecky P."/>
            <person name="Huang Y."/>
            <person name="Kaminker J.S."/>
            <person name="Millburn G.H."/>
            <person name="Prochnik S.E."/>
            <person name="Smith C.D."/>
            <person name="Tupy J.L."/>
            <person name="Whitfield E.J."/>
            <person name="Bayraktaroglu L."/>
            <person name="Berman B.P."/>
            <person name="Bettencourt B.R."/>
            <person name="Celniker S.E."/>
            <person name="de Grey A.D.N.J."/>
            <person name="Drysdale R.A."/>
            <person name="Harris N.L."/>
            <person name="Richter J."/>
            <person name="Russo S."/>
            <person name="Schroeder A.J."/>
            <person name="Shu S.Q."/>
            <person name="Stapleton M."/>
            <person name="Yamada C."/>
            <person name="Ashburner M."/>
            <person name="Gelbart W.M."/>
            <person name="Rubin G.M."/>
            <person name="Lewis S.E."/>
        </authorList>
    </citation>
    <scope>GENOME REANNOTATION</scope>
    <source>
        <strain>Berkeley</strain>
    </source>
</reference>
<reference key="5">
    <citation type="journal article" date="1991" name="J. Biol. Chem.">
        <title>Drosophila laminin A chain sequence, interspecies comparison, and domain structure of a major carboxyl portion.</title>
        <authorList>
            <person name="Garrison K."/>
            <person name="Mackrell A.J."/>
            <person name="Fessler J.H."/>
        </authorList>
    </citation>
    <scope>NUCLEOTIDE SEQUENCE [MRNA] OF 1762-3712</scope>
</reference>
<reference key="6">
    <citation type="journal article" date="2007" name="Glycobiology">
        <title>Identification of N-glycosylated proteins from the central nervous system of Drosophila melanogaster.</title>
        <authorList>
            <person name="Koles K."/>
            <person name="Lim J.-M."/>
            <person name="Aoki K."/>
            <person name="Porterfield M."/>
            <person name="Tiemeyer M."/>
            <person name="Wells L."/>
            <person name="Panin V."/>
        </authorList>
    </citation>
    <scope>GLYCOSYLATION [LARGE SCALE ANALYSIS] AT ASN-2196 AND ASN-2538</scope>
    <scope>IDENTIFICATION BY MASS SPECTROMETRY</scope>
    <source>
        <strain>Oregon-R</strain>
        <tissue>Head</tissue>
    </source>
</reference>
<reference key="7">
    <citation type="journal article" date="2012" name="Proc. Natl. Acad. Sci. U.S.A.">
        <title>Activity-dependent retrograde laminin A signaling regulates synapse growth at Drosophila neuromuscular junctions.</title>
        <authorList>
            <person name="Tsai P.I."/>
            <person name="Wang M."/>
            <person name="Kao H.H."/>
            <person name="Cheng Y.J."/>
            <person name="Lin Y.J."/>
            <person name="Chen R.H."/>
            <person name="Chien C.T."/>
        </authorList>
    </citation>
    <scope>FUNCTION</scope>
    <scope>SUBCELLULAR LOCATION</scope>
    <scope>TISSUE SPECIFICITY</scope>
</reference>
<comment type="function">
    <text evidence="10 11">Binding to cells via a high affinity receptor, laminin is thought to mediate the attachment, migration and organization of cells into tissues during embryonic development by interacting with other extracellular matrix components. Activates presynaptic signaling involving integrin alpha-PS3/beta-nu and Fak to suppress neuromuscular junction (NMJ) growth during larval development and during low crawling activity, but not during higher-crawling conditions. Mediates, together with integrin alpha-PS3/beta-nu, glutamate receptor-modulated NMJ growth.</text>
</comment>
<comment type="subunit">
    <text>Laminin is a complex glycoprotein, consisting of three different polypeptide chains (alpha, beta, gamma), which are bound to each other by disulfide bonds into a cross-shaped molecule comprising one long and three short arms with globules at each end.</text>
</comment>
<comment type="subcellular location">
    <subcellularLocation>
        <location>Secreted</location>
        <location>Extracellular space</location>
        <location>Extracellular matrix</location>
        <location>Basement membrane</location>
    </subcellularLocation>
    <subcellularLocation>
        <location>Synapse</location>
    </subcellularLocation>
    <subcellularLocation>
        <location>Cell projection</location>
        <location>Axon</location>
    </subcellularLocation>
    <subcellularLocation>
        <location>Cytoplasmic vesicle</location>
        <location>Secretory vesicle</location>
        <location>Synaptic vesicle</location>
    </subcellularLocation>
    <text>Major component of basement membranes. At neuromucular junctions, localizes in synaptic clefts of peri-active zones and in subsynaptic reticula.</text>
</comment>
<comment type="tissue specificity">
    <text evidence="8 10">Newly formed mesoderm and later prominently expressed in hemocytes, which also synthesize collagen IV. Expressed in muscles.</text>
</comment>
<comment type="developmental stage">
    <text evidence="8">During morphogenesis, mostly in embryo development at 10-12 hours.</text>
</comment>
<comment type="domain">
    <text>The alpha-helical domains I and II are thought to interact with other laminin chains to form a coiled coil structure.</text>
</comment>
<comment type="domain">
    <text>Domains VI, IV and G are globular.</text>
</comment>
<comment type="disruption phenotype">
    <text evidence="11">Flies show late embryonic lethality. Certain partial loss-of-function mutations give raise to escaper adults, which have rough eyes associated with changes in cell fate and pattern, misshappen legs and defects in wing structure.</text>
</comment>
<sequence length="3712" mass="411157">MGHGVASIGALLVILAISYCQAELTPPYFNLATGRKIYATATCGQDTDGPELYCKLVGANTEHDHIDYSVIQGQVCDYCDPTVPERNHPPENAIDGTEAWWQSPPLSRGMKFNEVNLTINFEQEFHVAYLFIRMGNSPRPGLWTLEKSTDYGKTWTPWQHFSDTPADCETYFGKDTYKPITRDDDVICTTEYSKIVPLENGEIPVMLLNERPSSTNYFNSTVLQEWTRATNVRIRLLRTKNLLGHLMSVARQDPTVTRRYFYSIKDISIGGRCMCNGHADTCDVKDPKSPVRILACRCQHHTCGIQCNECCPGFEQKKWRQNTNARPFNCEPCNCHGHSNECKYDEEVNRKGLSLDIHGHYDGGGVCQNCQHNTVGINCNKCKPKYYRPKGKHWNETDVCSPCQCDYFFSTGHCEEETGNCECRAAFQPPSCDSCAYGYYGYPNCRECECNLNGTNGYHCEAESGQQCPCKINFAGAYCKQCAEGYYGFPECKACECNKIGSITNDCNVTTGECKCLTNFGGDNCERCKHGYFNYPTCSYCDCDNQGTESEICNKQSGQCICREGFGGPRCDQCLPGFYNYPDCKPCNCSSTGSSAITCDNTGKCNCLNNFAGKQCTLCTAGYYSYPDCLPCHCDSHGSQGVSCNSDGQCLCQPNFDGRQCDSCKEGFYNFPSCEDCNCDPAGVIDKFAGCGSVPVGELCKCKERVTGRICNECKPLYWNLNISNTEGCEICDCWTDGTISALDTCTSKSGQCPCKPHTQGRRCQECRDGTFDLDSASLFGCKDCSCDVGGSWQSVCDKISGQCKCHPRITGLACTQPLTTHFFPTLHQFQYEYEDGSLPSGTQVRYDYDEAAFPGFSSKGYVVFNAIQNDVRNEVNVFKSSLYRIVLRYVNPNAENVTATISVTSDNPLEVDQHVKVLLQPTSEPQFVTVAGPLGVKPSAIVLDPGRYVFTTKANKNVMLDYFVLLPAAYYEAGILTRHISNPCELGNMELCRHYKYASVEVFSPAATPFVIGENSKPTNPVETYTDPEHLQIVSHVGDIPVLSGSQNELHYIVDVPRSGRYIFVIDYISDRNFPDSYYINLKLKDNPDSETSVLLYPCLYSTICRTSVNEDGMEKSFYINKEDLQPVIISADIEDGSRFPIISVTAIPVDQWSIDYINPSPVCVIHDQQCATPKFRSVPDSKKIEFETDHEDRIATNKPPYASLDERVKLVHLDSQNEATIVIESKVDATKPNLFVILVKYYQPSHPKYQVYYTLTAGKNQYDGKFDIQHCPSSSGCRGVIRPAGEGSFEIDDEFKFTITTDRSQSVWLDYLVVVPLKQYNDDLLVEETFDQTKEFIQNCGHDHFHITHNASDFCKKSVFSLTADYNSGALPCNCDYAGSTSFECHPFGGQCQCKPNVIERTCGACRSRYYGFPDCKPCKCPNSAMCEPTTGECMCPPNVIGDLCEKCAPNTYGFHQVIGCEECACNPMGIANGNSQCDLFNGTCECRQNIEGRACDVCSNGYFNFPHCEQCSCHKPGTELEVCDKIDGACFCKKNVVGRDCDQCVDGTYNLQESNPDGCTTCFCFGKTSRCDSAYLRVYNVSLLKHVSITTPEFHEESIKFDMWPVPADEILLNETTLKADFTLREVNDERPAYFGVLDYLLNQNNHISAYGGDLAYTLHFTSGFDGKYIVAPDVILFSEHNALVHTSYEQPSRNEPFTNRVNIVESNFQTISGKPVSRADFMMVLRDLKVIFIRANYWEQTLVTHLSDVYLTLADEDADGTGEYQFLAVERCSCPPGYSGHSCEDCAPGYYRDPSGPYGGYCIPCECNGHSETCDCATGICSKCQHGTEGDHCERCVSGYYGNATNGTPGDCMICACPLPFDSNNFATSCEISESGDQIHCECKPGYTGPRCESCANGFYGEPESIGQVCKPCECSGNINPEDQGSCDTRTGECLRCLNNTFGAACNLCAPGFYGDAIKLKNCQSCDCDDLGTQTCDPFVGVCTCHENVIGDRCDRCKPDHYGFESGVGCRACDCGAASNSTQCDPHTGHCACKSGVTGRQCDRCAVDHWKYEKDGCTPCNCNQGYSRGFGCNPNTGKCQCLPGVIGDRCDACPNRWVLIKDEGCQECNNCHHALLDVTDRMRYQIDSVLEDFNSVTLAFFTSQKLNYYDQLADELEPKVKLLDPNSVDLSPSKKANSELESDAKSYAKQVNQTLANAFDIRERSSTTLGNITVAYDEAVKSADQAKEAIASVEALSKNLEAAASTKIDAALEQAQHILGQINGTSIELTPNEQVLEKARKLYEEVNTLVLPIKAQNKSLNALKNDIGEFSDHLEDLFNWSEASQAKSADVERRNVANQKAFDNSKFDTVSEQKLQAEKNIKDAGNFLINGDLTLNQINQKLDNLRDALNELNSFNKNVDEELPVREDQHKEADALTDQAEQKAAELAIKAQDLAAQYTDMTASAEPAIKAATAYSGIVEAVEAAQKLSQDAISAAGNATDKTDGIEERAHLADTGSTDLLQRARQSLQKVQDDLEPRLNASAGKVQKISAVNNATEHQLKDINKLIDQLPAESQRDMWKNSNANASDALEILKNVLEILEPVSVQTPKELEKAHGINRDLDLTNKDVSQANKQLDDVEGSVSKLNELAEDIEEQQHRVGSQSRQLGQEIENLKAQVEAARQLANSIKVGVNFKPSTILELKTPEKTKLLATRTNLSTYFRTTEPSGFLLYLGNDNKTAQKNNDFVAVEIVNGYPILTIDLGNGPERITSDKYVADGRWYQAVVDRMGPNAKLTIREELPNGDVVEHSKSGYLEGSQNILHVDKNSRLFVGGYPGISDFNAPPDLTTNSFSGDIEDLKIGDESVGLWNFVYGDDNDQGARERDVLLEKKKPVTGLRFKGNGYVQLNATSNLKSRSSIQFSFKADKDTSNGLLFFYGRDKHYMSIEMIDGAIFFNISLGEGGGVQSGSQDRYNDNQWHKVQAERENRNGLLKVDDIVISRTNAPLEADLELPKLRRLYFGGHPRRLNTSISLQPNFDGCIDNVVINQGVVDLTEYVTGGGVEEGCSAKFSTVVSYAPHEYGFLRMNNVSSDNNLHVVLHFKTTQPNGVLFYAANHDQSSTIGLSLQDGLLKLNSMGSQLVIDDRILNDGEDHVVTVQHTQGELRLTVDDVDNKRLGSPQPLILEGGDIFFAGLPDNYRTPRNALASLAYFVGCISDVTVNEEIINFANSAEKKNGNINGCPPHVLAYEPSLVPSYYPSGDNEVESPWSNADTLPPLKPDIESTLPPTTPTTTTTTTTTTTSTTTTSTTTTTTTPSPIVIDEEKEIEAKTPQKILTTRPPAKLNLPSDERCKLPEQPNFDVDFTEAGYRFYGLREQRLQINSLPVKVRRHHDIGISFRTERPNGLLIYAGSKQRDDFIAVYLLDGRVTYEIRVGAQLQAKITTEAELNDGTWHTVEVVRTQRKVSLLIDKLEQPGSVDLNAERSAPVLAVELPIYLGGVNKFLESEVKNLTDFKTEVPYFNGCLKNIKFDAMDLETPPEEFGVVPCSEQVERGLFFNNQKAFVKIFDHFDVGTEMKISFDFRPRDPNGLLFSVHGKNSYAILELVDNTLYFTVKTDLKNIVSTNYKLPNNESFCDGKTRNVQAIKSKFVINIAVDFISSNPGVGNEGSVITRTNRPLFLGGHVAFQRAPGIKTKKSFKGCISKVEVNQRMINITPNMVVGDIWQGYCPLN</sequence>
<accession>Q00174</accession>
<accession>Q9VRW0</accession>
<feature type="signal peptide" evidence="2">
    <location>
        <begin position="1"/>
        <end position="22"/>
    </location>
</feature>
<feature type="chain" id="PRO_0000017064" description="Laminin subunit alpha">
    <location>
        <begin position="23"/>
        <end position="3712"/>
    </location>
</feature>
<feature type="domain" description="Laminin N-terminal" evidence="6">
    <location>
        <begin position="23"/>
        <end position="272"/>
    </location>
</feature>
<feature type="domain" description="Laminin EGF-like 1" evidence="5">
    <location>
        <begin position="273"/>
        <end position="332"/>
    </location>
</feature>
<feature type="domain" description="Laminin EGF-like 2" evidence="5">
    <location>
        <begin position="333"/>
        <end position="402"/>
    </location>
</feature>
<feature type="domain" description="Laminin EGF-like 3" evidence="5">
    <location>
        <begin position="403"/>
        <end position="447"/>
    </location>
</feature>
<feature type="domain" description="Laminin EGF-like 4" evidence="5">
    <location>
        <begin position="448"/>
        <end position="494"/>
    </location>
</feature>
<feature type="domain" description="Laminin EGF-like 5" evidence="5">
    <location>
        <begin position="495"/>
        <end position="540"/>
    </location>
</feature>
<feature type="domain" description="Laminin EGF-like 6" evidence="5">
    <location>
        <begin position="541"/>
        <end position="586"/>
    </location>
</feature>
<feature type="domain" description="Laminin EGF-like 7" evidence="5">
    <location>
        <begin position="587"/>
        <end position="631"/>
    </location>
</feature>
<feature type="domain" description="Laminin EGF-like 8" evidence="5">
    <location>
        <begin position="632"/>
        <end position="676"/>
    </location>
</feature>
<feature type="domain" description="Laminin EGF-like 9" evidence="5">
    <location>
        <begin position="677"/>
        <end position="731"/>
    </location>
</feature>
<feature type="domain" description="Laminin EGF-like 10" evidence="5">
    <location>
        <begin position="732"/>
        <end position="784"/>
    </location>
</feature>
<feature type="domain" description="Laminin EGF-like 11; truncated" evidence="5">
    <location>
        <begin position="785"/>
        <end position="815"/>
    </location>
</feature>
<feature type="domain" description="Laminin EGF-like 12" evidence="5">
    <location>
        <begin position="1375"/>
        <end position="1420"/>
    </location>
</feature>
<feature type="domain" description="Laminin EGF-like 13" evidence="5">
    <location>
        <begin position="1421"/>
        <end position="1465"/>
    </location>
</feature>
<feature type="domain" description="Laminin EGF-like 14" evidence="5">
    <location>
        <begin position="1466"/>
        <end position="1513"/>
    </location>
</feature>
<feature type="domain" description="Laminin EGF-like 15" evidence="5">
    <location>
        <begin position="1514"/>
        <end position="1564"/>
    </location>
</feature>
<feature type="domain" description="Laminin EGF-like 16; first part" evidence="5">
    <location>
        <begin position="1565"/>
        <end position="1574"/>
    </location>
</feature>
<feature type="domain" description="Laminin IV type A" evidence="4">
    <location>
        <begin position="1585"/>
        <end position="1775"/>
    </location>
</feature>
<feature type="domain" description="Laminin EGF-like 16; second part" evidence="5">
    <location>
        <begin position="1776"/>
        <end position="1808"/>
    </location>
</feature>
<feature type="domain" description="Laminin EGF-like 17" evidence="5">
    <location>
        <begin position="1809"/>
        <end position="1858"/>
    </location>
</feature>
<feature type="domain" description="Laminin EGF-like 18" evidence="5">
    <location>
        <begin position="1859"/>
        <end position="1916"/>
    </location>
</feature>
<feature type="domain" description="Laminin EGF-like 19" evidence="5">
    <location>
        <begin position="1917"/>
        <end position="1969"/>
    </location>
</feature>
<feature type="domain" description="Laminin EGF-like 20" evidence="5">
    <location>
        <begin position="1970"/>
        <end position="2016"/>
    </location>
</feature>
<feature type="domain" description="Laminin EGF-like 21" evidence="5">
    <location>
        <begin position="2017"/>
        <end position="2063"/>
    </location>
</feature>
<feature type="domain" description="Laminin EGF-like 22" evidence="5">
    <location>
        <begin position="2064"/>
        <end position="2111"/>
    </location>
</feature>
<feature type="domain" description="Laminin G-like 1" evidence="3">
    <location>
        <begin position="2672"/>
        <end position="2868"/>
    </location>
</feature>
<feature type="domain" description="Laminin G-like 2" evidence="3">
    <location>
        <begin position="2876"/>
        <end position="3048"/>
    </location>
</feature>
<feature type="domain" description="Laminin G-like 3" evidence="3">
    <location>
        <begin position="3055"/>
        <end position="3223"/>
    </location>
</feature>
<feature type="domain" description="Laminin G-like 4" evidence="3">
    <location>
        <begin position="3349"/>
        <end position="3528"/>
    </location>
</feature>
<feature type="domain" description="Laminin G-like 5" evidence="3">
    <location>
        <begin position="3534"/>
        <end position="3709"/>
    </location>
</feature>
<feature type="region of interest" description="Domain IV''">
    <location>
        <begin position="816"/>
        <end position="1374"/>
    </location>
</feature>
<feature type="region of interest" description="Domain II and I">
    <location>
        <begin position="2112"/>
        <end position="2671"/>
    </location>
</feature>
<feature type="region of interest" description="Disordered" evidence="7">
    <location>
        <begin position="3244"/>
        <end position="3297"/>
    </location>
</feature>
<feature type="coiled-coil region" evidence="2">
    <location>
        <begin position="2178"/>
        <end position="2249"/>
    </location>
</feature>
<feature type="coiled-coil region" evidence="2">
    <location>
        <begin position="2301"/>
        <end position="2321"/>
    </location>
</feature>
<feature type="coiled-coil region" evidence="2">
    <location>
        <begin position="2376"/>
        <end position="2450"/>
    </location>
</feature>
<feature type="coiled-coil region" evidence="2">
    <location>
        <begin position="2541"/>
        <end position="2676"/>
    </location>
</feature>
<feature type="compositionally biased region" description="Low complexity" evidence="7">
    <location>
        <begin position="3265"/>
        <end position="3297"/>
    </location>
</feature>
<feature type="glycosylation site" description="N-linked (GlcNAc...) asparagine" evidence="2">
    <location>
        <position position="116"/>
    </location>
</feature>
<feature type="glycosylation site" description="N-linked (GlcNAc...) asparagine" evidence="2">
    <location>
        <position position="219"/>
    </location>
</feature>
<feature type="glycosylation site" description="N-linked (GlcNAc...) asparagine" evidence="2">
    <location>
        <position position="395"/>
    </location>
</feature>
<feature type="glycosylation site" description="N-linked (GlcNAc...) asparagine" evidence="2">
    <location>
        <position position="453"/>
    </location>
</feature>
<feature type="glycosylation site" description="N-linked (GlcNAc...) asparagine" evidence="2">
    <location>
        <position position="508"/>
    </location>
</feature>
<feature type="glycosylation site" description="N-linked (GlcNAc...) asparagine" evidence="2">
    <location>
        <position position="588"/>
    </location>
</feature>
<feature type="glycosylation site" description="N-linked (GlcNAc...) asparagine" evidence="2">
    <location>
        <position position="722"/>
    </location>
</feature>
<feature type="glycosylation site" description="N-linked (GlcNAc...) asparagine" evidence="2">
    <location>
        <position position="897"/>
    </location>
</feature>
<feature type="glycosylation site" description="N-linked (GlcNAc...) asparagine" evidence="2">
    <location>
        <position position="1352"/>
    </location>
</feature>
<feature type="glycosylation site" description="N-linked (GlcNAc...) asparagine" evidence="2">
    <location>
        <position position="1484"/>
    </location>
</feature>
<feature type="glycosylation site" description="N-linked (GlcNAc...) asparagine" evidence="2">
    <location>
        <position position="1583"/>
    </location>
</feature>
<feature type="glycosylation site" description="N-linked (GlcNAc...) asparagine" evidence="2">
    <location>
        <position position="1617"/>
    </location>
</feature>
<feature type="glycosylation site" description="N-linked (GlcNAc...) asparagine" evidence="2">
    <location>
        <position position="1847"/>
    </location>
</feature>
<feature type="glycosylation site" description="N-linked (GlcNAc...) asparagine" evidence="2">
    <location>
        <position position="1943"/>
    </location>
</feature>
<feature type="glycosylation site" description="N-linked (GlcNAc...) asparagine" evidence="2">
    <location>
        <position position="2024"/>
    </location>
</feature>
<feature type="glycosylation site" description="N-linked (GlcNAc...) asparagine" evidence="9">
    <location>
        <position position="2196"/>
    </location>
</feature>
<feature type="glycosylation site" description="N-linked (GlcNAc...) asparagine" evidence="2">
    <location>
        <position position="2215"/>
    </location>
</feature>
<feature type="glycosylation site" description="N-linked (GlcNAc...) asparagine" evidence="2">
    <location>
        <position position="2267"/>
    </location>
</feature>
<feature type="glycosylation site" description="N-linked (GlcNAc...) asparagine" evidence="2">
    <location>
        <position position="2301"/>
    </location>
</feature>
<feature type="glycosylation site" description="N-linked (GlcNAc...) asparagine" evidence="2">
    <location>
        <position position="2323"/>
    </location>
</feature>
<feature type="glycosylation site" description="N-linked (GlcNAc...) asparagine" evidence="2">
    <location>
        <position position="2482"/>
    </location>
</feature>
<feature type="glycosylation site" description="N-linked (GlcNAc...) asparagine" evidence="2">
    <location>
        <position position="2524"/>
    </location>
</feature>
<feature type="glycosylation site" description="N-linked (GlcNAc...) asparagine" evidence="9">
    <location>
        <position position="2538"/>
    </location>
</feature>
<feature type="glycosylation site" description="N-linked (GlcNAc...) asparagine" evidence="2">
    <location>
        <position position="2569"/>
    </location>
</feature>
<feature type="glycosylation site" description="N-linked (GlcNAc...) asparagine" evidence="2">
    <location>
        <position position="2699"/>
    </location>
</feature>
<feature type="glycosylation site" description="N-linked (GlcNAc...) asparagine" evidence="2">
    <location>
        <position position="2720"/>
    </location>
</feature>
<feature type="glycosylation site" description="N-linked (GlcNAc...) asparagine" evidence="2">
    <location>
        <position position="2890"/>
    </location>
</feature>
<feature type="glycosylation site" description="N-linked (GlcNAc...) asparagine" evidence="2">
    <location>
        <position position="2938"/>
    </location>
</feature>
<feature type="glycosylation site" description="N-linked (GlcNAc...) asparagine" evidence="2">
    <location>
        <position position="3010"/>
    </location>
</feature>
<feature type="glycosylation site" description="N-linked (GlcNAc...) asparagine" evidence="2">
    <location>
        <position position="3070"/>
    </location>
</feature>
<feature type="glycosylation site" description="N-linked (GlcNAc...) asparagine" evidence="2">
    <location>
        <position position="3491"/>
    </location>
</feature>
<feature type="glycosylation site" description="N-linked (GlcNAc...) asparagine" evidence="2">
    <location>
        <position position="3612"/>
    </location>
</feature>
<feature type="disulfide bond" evidence="1">
    <location>
        <begin position="273"/>
        <end position="282"/>
    </location>
</feature>
<feature type="disulfide bond" evidence="1">
    <location>
        <begin position="275"/>
        <end position="296"/>
    </location>
</feature>
<feature type="disulfide bond" evidence="1">
    <location>
        <begin position="298"/>
        <end position="307"/>
    </location>
</feature>
<feature type="disulfide bond" evidence="1">
    <location>
        <begin position="310"/>
        <end position="330"/>
    </location>
</feature>
<feature type="disulfide bond" evidence="1">
    <location>
        <begin position="333"/>
        <end position="342"/>
    </location>
</feature>
<feature type="disulfide bond" evidence="1">
    <location>
        <begin position="335"/>
        <end position="367"/>
    </location>
</feature>
<feature type="disulfide bond" evidence="1">
    <location>
        <begin position="370"/>
        <end position="379"/>
    </location>
</feature>
<feature type="disulfide bond" evidence="1">
    <location>
        <begin position="382"/>
        <end position="400"/>
    </location>
</feature>
<feature type="disulfide bond" evidence="1">
    <location>
        <begin position="403"/>
        <end position="414"/>
    </location>
</feature>
<feature type="disulfide bond" evidence="1">
    <location>
        <begin position="405"/>
        <end position="421"/>
    </location>
</feature>
<feature type="disulfide bond" evidence="1">
    <location>
        <begin position="423"/>
        <end position="432"/>
    </location>
</feature>
<feature type="disulfide bond" evidence="1">
    <location>
        <begin position="435"/>
        <end position="445"/>
    </location>
</feature>
<feature type="disulfide bond" evidence="1">
    <location>
        <begin position="448"/>
        <end position="460"/>
    </location>
</feature>
<feature type="disulfide bond" evidence="1">
    <location>
        <begin position="450"/>
        <end position="468"/>
    </location>
</feature>
<feature type="disulfide bond" evidence="1">
    <location>
        <begin position="470"/>
        <end position="479"/>
    </location>
</feature>
<feature type="disulfide bond" evidence="1">
    <location>
        <begin position="482"/>
        <end position="492"/>
    </location>
</feature>
<feature type="disulfide bond" evidence="1">
    <location>
        <begin position="495"/>
        <end position="507"/>
    </location>
</feature>
<feature type="disulfide bond" evidence="1">
    <location>
        <begin position="497"/>
        <end position="514"/>
    </location>
</feature>
<feature type="disulfide bond" evidence="1">
    <location>
        <begin position="516"/>
        <end position="525"/>
    </location>
</feature>
<feature type="disulfide bond" evidence="1">
    <location>
        <begin position="528"/>
        <end position="538"/>
    </location>
</feature>
<feature type="disulfide bond" evidence="1">
    <location>
        <begin position="541"/>
        <end position="553"/>
    </location>
</feature>
<feature type="disulfide bond" evidence="1">
    <location>
        <begin position="543"/>
        <end position="560"/>
    </location>
</feature>
<feature type="disulfide bond" evidence="1">
    <location>
        <begin position="562"/>
        <end position="571"/>
    </location>
</feature>
<feature type="disulfide bond" evidence="1">
    <location>
        <begin position="574"/>
        <end position="584"/>
    </location>
</feature>
<feature type="disulfide bond" evidence="1">
    <location>
        <begin position="587"/>
        <end position="599"/>
    </location>
</feature>
<feature type="disulfide bond" evidence="1">
    <location>
        <begin position="589"/>
        <end position="605"/>
    </location>
</feature>
<feature type="disulfide bond" evidence="1">
    <location>
        <begin position="607"/>
        <end position="616"/>
    </location>
</feature>
<feature type="disulfide bond" evidence="1">
    <location>
        <begin position="619"/>
        <end position="629"/>
    </location>
</feature>
<feature type="disulfide bond" evidence="1">
    <location>
        <begin position="632"/>
        <end position="644"/>
    </location>
</feature>
<feature type="disulfide bond" evidence="1">
    <location>
        <begin position="634"/>
        <end position="650"/>
    </location>
</feature>
<feature type="disulfide bond" evidence="1">
    <location>
        <begin position="652"/>
        <end position="661"/>
    </location>
</feature>
<feature type="disulfide bond" evidence="1">
    <location>
        <begin position="664"/>
        <end position="674"/>
    </location>
</feature>
<feature type="disulfide bond" evidence="1">
    <location>
        <begin position="677"/>
        <end position="691"/>
    </location>
</feature>
<feature type="disulfide bond" evidence="1">
    <location>
        <begin position="679"/>
        <end position="700"/>
    </location>
</feature>
<feature type="disulfide bond" evidence="1">
    <location>
        <begin position="702"/>
        <end position="711"/>
    </location>
</feature>
<feature type="disulfide bond" evidence="1">
    <location>
        <begin position="714"/>
        <end position="729"/>
    </location>
</feature>
<feature type="disulfide bond" evidence="1">
    <location>
        <begin position="732"/>
        <end position="746"/>
    </location>
</feature>
<feature type="disulfide bond" evidence="1">
    <location>
        <begin position="734"/>
        <end position="753"/>
    </location>
</feature>
<feature type="disulfide bond" evidence="1">
    <location>
        <begin position="755"/>
        <end position="764"/>
    </location>
</feature>
<feature type="disulfide bond" evidence="1">
    <location>
        <begin position="767"/>
        <end position="782"/>
    </location>
</feature>
<feature type="disulfide bond" evidence="1">
    <location>
        <begin position="785"/>
        <end position="797"/>
    </location>
</feature>
<feature type="disulfide bond" evidence="1">
    <location>
        <begin position="787"/>
        <end position="804"/>
    </location>
</feature>
<feature type="disulfide bond" evidence="1">
    <location>
        <begin position="806"/>
        <end position="815"/>
    </location>
</feature>
<feature type="disulfide bond" evidence="1">
    <location>
        <begin position="1375"/>
        <end position="1387"/>
    </location>
</feature>
<feature type="disulfide bond" evidence="1">
    <location>
        <begin position="1377"/>
        <end position="1394"/>
    </location>
</feature>
<feature type="disulfide bond" evidence="1">
    <location>
        <begin position="1396"/>
        <end position="1405"/>
    </location>
</feature>
<feature type="disulfide bond" evidence="1">
    <location>
        <begin position="1408"/>
        <end position="1418"/>
    </location>
</feature>
<feature type="disulfide bond" evidence="1">
    <location>
        <begin position="1421"/>
        <end position="1429"/>
    </location>
</feature>
<feature type="disulfide bond" evidence="1">
    <location>
        <begin position="1423"/>
        <end position="1436"/>
    </location>
</feature>
<feature type="disulfide bond" evidence="1">
    <location>
        <begin position="1438"/>
        <end position="1447"/>
    </location>
</feature>
<feature type="disulfide bond" evidence="1">
    <location>
        <begin position="1450"/>
        <end position="1463"/>
    </location>
</feature>
<feature type="disulfide bond" evidence="1">
    <location>
        <begin position="1466"/>
        <end position="1480"/>
    </location>
</feature>
<feature type="disulfide bond" evidence="1">
    <location>
        <begin position="1468"/>
        <end position="1487"/>
    </location>
</feature>
<feature type="disulfide bond" evidence="1">
    <location>
        <begin position="1489"/>
        <end position="1498"/>
    </location>
</feature>
<feature type="disulfide bond" evidence="1">
    <location>
        <begin position="1501"/>
        <end position="1511"/>
    </location>
</feature>
<feature type="disulfide bond" evidence="1">
    <location>
        <begin position="1514"/>
        <end position="1526"/>
    </location>
</feature>
<feature type="disulfide bond" evidence="1">
    <location>
        <begin position="1516"/>
        <end position="1533"/>
    </location>
</feature>
<feature type="disulfide bond" evidence="1">
    <location>
        <begin position="1535"/>
        <end position="1544"/>
    </location>
</feature>
<feature type="disulfide bond" evidence="1">
    <location>
        <begin position="1547"/>
        <end position="1562"/>
    </location>
</feature>
<feature type="disulfide bond" evidence="1">
    <location>
        <begin position="1778"/>
        <end position="1787"/>
    </location>
</feature>
<feature type="disulfide bond" evidence="1">
    <location>
        <begin position="1790"/>
        <end position="1806"/>
    </location>
</feature>
<feature type="disulfide bond" evidence="1">
    <location>
        <begin position="1809"/>
        <end position="1818"/>
    </location>
</feature>
<feature type="disulfide bond" evidence="1">
    <location>
        <begin position="1811"/>
        <end position="1825"/>
    </location>
</feature>
<feature type="disulfide bond" evidence="1">
    <location>
        <begin position="1828"/>
        <end position="1837"/>
    </location>
</feature>
<feature type="disulfide bond" evidence="1">
    <location>
        <begin position="1840"/>
        <end position="1856"/>
    </location>
</feature>
<feature type="disulfide bond" evidence="1">
    <location>
        <begin position="1859"/>
        <end position="1874"/>
    </location>
</feature>
<feature type="disulfide bond" evidence="1">
    <location>
        <begin position="1861"/>
        <end position="1885"/>
    </location>
</feature>
<feature type="disulfide bond" evidence="1">
    <location>
        <begin position="1887"/>
        <end position="1896"/>
    </location>
</feature>
<feature type="disulfide bond" evidence="1">
    <location>
        <begin position="1899"/>
        <end position="1914"/>
    </location>
</feature>
<feature type="disulfide bond" evidence="1">
    <location>
        <begin position="1917"/>
        <end position="1931"/>
    </location>
</feature>
<feature type="disulfide bond" evidence="1">
    <location>
        <begin position="1919"/>
        <end position="1938"/>
    </location>
</feature>
<feature type="disulfide bond" evidence="1">
    <location>
        <begin position="1941"/>
        <end position="1950"/>
    </location>
</feature>
<feature type="disulfide bond" evidence="1">
    <location>
        <begin position="1953"/>
        <end position="1967"/>
    </location>
</feature>
<feature type="disulfide bond" evidence="1">
    <location>
        <begin position="1970"/>
        <end position="1980"/>
    </location>
</feature>
<feature type="disulfide bond" evidence="1">
    <location>
        <begin position="1972"/>
        <end position="1987"/>
    </location>
</feature>
<feature type="disulfide bond" evidence="1">
    <location>
        <begin position="1989"/>
        <end position="1998"/>
    </location>
</feature>
<feature type="disulfide bond" evidence="1">
    <location>
        <begin position="2001"/>
        <end position="2014"/>
    </location>
</feature>
<feature type="disulfide bond" evidence="1">
    <location>
        <begin position="2017"/>
        <end position="2028"/>
    </location>
</feature>
<feature type="disulfide bond" evidence="1">
    <location>
        <begin position="2019"/>
        <end position="2035"/>
    </location>
</feature>
<feature type="disulfide bond" evidence="1">
    <location>
        <begin position="2037"/>
        <end position="2046"/>
    </location>
</feature>
<feature type="disulfide bond" evidence="1">
    <location>
        <begin position="2049"/>
        <end position="2061"/>
    </location>
</feature>
<feature type="disulfide bond" evidence="1">
    <location>
        <begin position="2064"/>
        <end position="2076"/>
    </location>
</feature>
<feature type="disulfide bond" evidence="1">
    <location>
        <begin position="2066"/>
        <end position="2083"/>
    </location>
</feature>
<feature type="disulfide bond" evidence="1">
    <location>
        <begin position="2085"/>
        <end position="2094"/>
    </location>
</feature>
<feature type="disulfide bond" evidence="1">
    <location>
        <begin position="2097"/>
        <end position="2109"/>
    </location>
</feature>
<feature type="disulfide bond" description="Interchain" evidence="12">
    <location>
        <position position="2112"/>
    </location>
</feature>
<feature type="disulfide bond" description="Interchain" evidence="12">
    <location>
        <position position="2115"/>
    </location>
</feature>
<feature type="disulfide bond" evidence="1">
    <location>
        <begin position="3022"/>
        <end position="3048"/>
    </location>
</feature>
<feature type="disulfide bond" evidence="1">
    <location>
        <begin position="3196"/>
        <end position="3223"/>
    </location>
</feature>
<feature type="disulfide bond" evidence="1">
    <location>
        <begin position="3505"/>
        <end position="3528"/>
    </location>
</feature>
<feature type="disulfide bond" evidence="1">
    <location>
        <begin position="3682"/>
        <end position="3709"/>
    </location>
</feature>
<feature type="sequence conflict" description="In Ref. 1; AAA28662." evidence="12" ref="1">
    <original>Q</original>
    <variation>P</variation>
    <location>
        <position position="45"/>
    </location>
</feature>
<feature type="sequence conflict" description="In Ref. 2; AAC37178." evidence="12" ref="2">
    <original>L</original>
    <variation>R</variation>
    <location>
        <position position="1032"/>
    </location>
</feature>
<feature type="sequence conflict" description="In Ref. 1; AAA28662." evidence="12" ref="1">
    <original>A</original>
    <variation>R</variation>
    <location>
        <position position="1407"/>
    </location>
</feature>
<feature type="sequence conflict" description="In Ref. 2; AAC37178." evidence="12" ref="2">
    <original>P</original>
    <variation>Q</variation>
    <location>
        <position position="1559"/>
    </location>
</feature>
<feature type="sequence conflict" description="In Ref. 2; AAC37178." evidence="12" ref="2">
    <original>H</original>
    <variation>Q</variation>
    <location>
        <position position="1598"/>
    </location>
</feature>
<feature type="sequence conflict" description="In Ref. 2; AAC37178." evidence="12" ref="2">
    <original>Q</original>
    <variation>E</variation>
    <location>
        <position position="1912"/>
    </location>
</feature>
<feature type="sequence conflict" description="In Ref. 3; AAF50672." evidence="12" ref="3">
    <original>N</original>
    <variation>S</variation>
    <location>
        <position position="2630"/>
    </location>
</feature>
<evidence type="ECO:0000250" key="1"/>
<evidence type="ECO:0000255" key="2"/>
<evidence type="ECO:0000255" key="3">
    <source>
        <dbReference type="PROSITE-ProRule" id="PRU00122"/>
    </source>
</evidence>
<evidence type="ECO:0000255" key="4">
    <source>
        <dbReference type="PROSITE-ProRule" id="PRU00458"/>
    </source>
</evidence>
<evidence type="ECO:0000255" key="5">
    <source>
        <dbReference type="PROSITE-ProRule" id="PRU00460"/>
    </source>
</evidence>
<evidence type="ECO:0000255" key="6">
    <source>
        <dbReference type="PROSITE-ProRule" id="PRU00466"/>
    </source>
</evidence>
<evidence type="ECO:0000256" key="7">
    <source>
        <dbReference type="SAM" id="MobiDB-lite"/>
    </source>
</evidence>
<evidence type="ECO:0000269" key="8">
    <source>
    </source>
</evidence>
<evidence type="ECO:0000269" key="9">
    <source>
    </source>
</evidence>
<evidence type="ECO:0000269" key="10">
    <source>
    </source>
</evidence>
<evidence type="ECO:0000269" key="11">
    <source>
    </source>
</evidence>
<evidence type="ECO:0000305" key="12"/>
<keyword id="KW-0084">Basement membrane</keyword>
<keyword id="KW-0130">Cell adhesion</keyword>
<keyword id="KW-0966">Cell projection</keyword>
<keyword id="KW-0175">Coiled coil</keyword>
<keyword id="KW-0968">Cytoplasmic vesicle</keyword>
<keyword id="KW-1015">Disulfide bond</keyword>
<keyword id="KW-0272">Extracellular matrix</keyword>
<keyword id="KW-0325">Glycoprotein</keyword>
<keyword id="KW-0424">Laminin EGF-like domain</keyword>
<keyword id="KW-1185">Reference proteome</keyword>
<keyword id="KW-0677">Repeat</keyword>
<keyword id="KW-0964">Secreted</keyword>
<keyword id="KW-0732">Signal</keyword>
<keyword id="KW-0770">Synapse</keyword>
<gene>
    <name type="primary">LanA</name>
    <name type="synonym">lamA</name>
    <name type="ORF">CG10236</name>
</gene>
<proteinExistence type="evidence at protein level"/>
<name>LAMA_DROME</name>
<protein>
    <recommendedName>
        <fullName>Laminin subunit alpha</fullName>
    </recommendedName>
    <alternativeName>
        <fullName>Laminin A chain</fullName>
    </alternativeName>
</protein>